<protein>
    <recommendedName>
        <fullName>Cecropin-C type 2</fullName>
        <shortName>Cecropin-C2</shortName>
    </recommendedName>
    <component>
        <recommendedName>
            <fullName>Cecropin-C</fullName>
        </recommendedName>
        <alternativeName>
            <fullName>AalCecC</fullName>
        </alternativeName>
    </component>
</protein>
<feature type="signal peptide">
    <location>
        <begin position="1"/>
        <end position="23"/>
    </location>
</feature>
<feature type="chain" id="PRO_0000004819" description="Cecropin-C">
    <location>
        <begin position="24"/>
        <end position="58"/>
    </location>
</feature>
<evidence type="ECO:0000250" key="1"/>
<evidence type="ECO:0000305" key="2"/>
<comment type="function">
    <text evidence="1">Cecropins have lytic and antibacterial activity against several Gram-positive and Gram-negative bacteria.</text>
</comment>
<comment type="subcellular location">
    <subcellularLocation>
        <location>Secreted</location>
    </subcellularLocation>
</comment>
<comment type="similarity">
    <text evidence="2">Belongs to the cecropin family.</text>
</comment>
<name>CECC2_AEDAL</name>
<accession>Q963A8</accession>
<dbReference type="EMBL" id="AF394746">
    <property type="protein sequence ID" value="AAK81852.1"/>
    <property type="molecule type" value="Genomic_DNA"/>
</dbReference>
<dbReference type="SMR" id="Q963A8"/>
<dbReference type="Proteomes" id="UP000069940">
    <property type="component" value="Unassembled WGS sequence"/>
</dbReference>
<dbReference type="GO" id="GO:0005615">
    <property type="term" value="C:extracellular space"/>
    <property type="evidence" value="ECO:0007669"/>
    <property type="project" value="TreeGrafter"/>
</dbReference>
<dbReference type="GO" id="GO:0019731">
    <property type="term" value="P:antibacterial humoral response"/>
    <property type="evidence" value="ECO:0007669"/>
    <property type="project" value="InterPro"/>
</dbReference>
<dbReference type="GO" id="GO:0050829">
    <property type="term" value="P:defense response to Gram-negative bacterium"/>
    <property type="evidence" value="ECO:0007669"/>
    <property type="project" value="UniProtKB-ARBA"/>
</dbReference>
<dbReference type="GO" id="GO:0050830">
    <property type="term" value="P:defense response to Gram-positive bacterium"/>
    <property type="evidence" value="ECO:0007669"/>
    <property type="project" value="TreeGrafter"/>
</dbReference>
<dbReference type="GO" id="GO:0045087">
    <property type="term" value="P:innate immune response"/>
    <property type="evidence" value="ECO:0007669"/>
    <property type="project" value="UniProtKB-KW"/>
</dbReference>
<dbReference type="InterPro" id="IPR000875">
    <property type="entry name" value="Cecropin"/>
</dbReference>
<dbReference type="InterPro" id="IPR020400">
    <property type="entry name" value="Cecropin_insect"/>
</dbReference>
<dbReference type="PANTHER" id="PTHR38329">
    <property type="entry name" value="CECROPIN-A1-RELATED"/>
    <property type="match status" value="1"/>
</dbReference>
<dbReference type="PANTHER" id="PTHR38329:SF1">
    <property type="entry name" value="CECROPIN-A1-RELATED"/>
    <property type="match status" value="1"/>
</dbReference>
<dbReference type="Pfam" id="PF00272">
    <property type="entry name" value="Cecropin"/>
    <property type="match status" value="1"/>
</dbReference>
<organism>
    <name type="scientific">Aedes albopictus</name>
    <name type="common">Asian tiger mosquito</name>
    <name type="synonym">Stegomyia albopicta</name>
    <dbReference type="NCBI Taxonomy" id="7160"/>
    <lineage>
        <taxon>Eukaryota</taxon>
        <taxon>Metazoa</taxon>
        <taxon>Ecdysozoa</taxon>
        <taxon>Arthropoda</taxon>
        <taxon>Hexapoda</taxon>
        <taxon>Insecta</taxon>
        <taxon>Pterygota</taxon>
        <taxon>Neoptera</taxon>
        <taxon>Endopterygota</taxon>
        <taxon>Diptera</taxon>
        <taxon>Nematocera</taxon>
        <taxon>Culicoidea</taxon>
        <taxon>Culicidae</taxon>
        <taxon>Culicinae</taxon>
        <taxon>Aedini</taxon>
        <taxon>Aedes</taxon>
        <taxon>Stegomyia</taxon>
    </lineage>
</organism>
<gene>
    <name type="primary">CECC2</name>
</gene>
<reference key="1">
    <citation type="submission" date="2001-06" db="EMBL/GenBank/DDBJ databases">
        <title>Characterization of genomic DNA encoding mosquito cecropins.</title>
        <authorList>
            <person name="Sun D."/>
            <person name="Fallon A.M."/>
        </authorList>
    </citation>
    <scope>NUCLEOTIDE SEQUENCE [GENOMIC DNA]</scope>
</reference>
<sequence>MNFAKVFVLVAMAVLLLVGQSEAGGLKKLGKKLEGAGKRVFNAAEKALPVVAGAKALGK</sequence>
<keyword id="KW-0044">Antibiotic</keyword>
<keyword id="KW-0929">Antimicrobial</keyword>
<keyword id="KW-0391">Immunity</keyword>
<keyword id="KW-0399">Innate immunity</keyword>
<keyword id="KW-0964">Secreted</keyword>
<keyword id="KW-0732">Signal</keyword>
<proteinExistence type="inferred from homology"/>